<protein>
    <recommendedName>
        <fullName>Protein FAM170A</fullName>
    </recommendedName>
    <alternativeName>
        <fullName>Zinc finger domain-containing protein</fullName>
    </alternativeName>
    <alternativeName>
        <fullName>Zinc finger protein ZNFD</fullName>
    </alternativeName>
</protein>
<dbReference type="EMBL" id="AY692448">
    <property type="protein sequence ID" value="AAU04856.1"/>
    <property type="molecule type" value="mRNA"/>
</dbReference>
<dbReference type="EMBL" id="AY692449">
    <property type="protein sequence ID" value="AAU04857.1"/>
    <property type="molecule type" value="mRNA"/>
</dbReference>
<dbReference type="EMBL" id="BC147592">
    <property type="protein sequence ID" value="AAI47593.1"/>
    <property type="molecule type" value="mRNA"/>
</dbReference>
<dbReference type="EMBL" id="BC147595">
    <property type="protein sequence ID" value="AAI47596.1"/>
    <property type="molecule type" value="mRNA"/>
</dbReference>
<dbReference type="CCDS" id="CCDS29243.1">
    <molecule id="Q66LM6-1"/>
</dbReference>
<dbReference type="RefSeq" id="NP_001004061.1">
    <molecule id="Q66LM6-1"/>
    <property type="nucleotide sequence ID" value="NM_001004061.2"/>
</dbReference>
<dbReference type="BioGRID" id="230401">
    <property type="interactions" value="2"/>
</dbReference>
<dbReference type="FunCoup" id="Q66LM6">
    <property type="interactions" value="452"/>
</dbReference>
<dbReference type="STRING" id="10090.ENSMUSP00000035910"/>
<dbReference type="iPTMnet" id="Q66LM6"/>
<dbReference type="PhosphoSitePlus" id="Q66LM6"/>
<dbReference type="PaxDb" id="10090-ENSMUSP00000035910"/>
<dbReference type="ProteomicsDB" id="267678">
    <molecule id="Q66LM6-1"/>
</dbReference>
<dbReference type="ProteomicsDB" id="267679">
    <molecule id="Q66LM6-2"/>
</dbReference>
<dbReference type="Antibodypedia" id="50043">
    <property type="antibodies" value="64 antibodies from 10 providers"/>
</dbReference>
<dbReference type="DNASU" id="225497"/>
<dbReference type="Ensembl" id="ENSMUST00000039121.4">
    <molecule id="Q66LM6-1"/>
    <property type="protein sequence ID" value="ENSMUSP00000035910.3"/>
    <property type="gene ID" value="ENSMUSG00000035420.8"/>
</dbReference>
<dbReference type="GeneID" id="225497"/>
<dbReference type="KEGG" id="mmu:225497"/>
<dbReference type="UCSC" id="uc008ewx.1">
    <molecule id="Q66LM6-1"/>
    <property type="organism name" value="mouse"/>
</dbReference>
<dbReference type="AGR" id="MGI:2684939"/>
<dbReference type="CTD" id="340069"/>
<dbReference type="MGI" id="MGI:2684939">
    <property type="gene designation" value="Fam170a"/>
</dbReference>
<dbReference type="VEuPathDB" id="HostDB:ENSMUSG00000035420"/>
<dbReference type="eggNOG" id="ENOG502TH7F">
    <property type="taxonomic scope" value="Eukaryota"/>
</dbReference>
<dbReference type="GeneTree" id="ENSGT00940000162220"/>
<dbReference type="HOGENOM" id="CLU_062038_2_0_1"/>
<dbReference type="InParanoid" id="Q66LM6"/>
<dbReference type="OMA" id="HVFHRTM"/>
<dbReference type="PhylomeDB" id="Q66LM6"/>
<dbReference type="TreeFam" id="TF337124"/>
<dbReference type="BioGRID-ORCS" id="225497">
    <property type="hits" value="1 hit in 78 CRISPR screens"/>
</dbReference>
<dbReference type="PRO" id="PR:Q66LM6"/>
<dbReference type="Proteomes" id="UP000000589">
    <property type="component" value="Chromosome 18"/>
</dbReference>
<dbReference type="RNAct" id="Q66LM6">
    <property type="molecule type" value="protein"/>
</dbReference>
<dbReference type="Bgee" id="ENSMUSG00000035420">
    <property type="expression patterns" value="Expressed in seminiferous tubule of testis and 3 other cell types or tissues"/>
</dbReference>
<dbReference type="ExpressionAtlas" id="Q66LM6">
    <property type="expression patterns" value="baseline and differential"/>
</dbReference>
<dbReference type="GO" id="GO:0005634">
    <property type="term" value="C:nucleus"/>
    <property type="evidence" value="ECO:0000314"/>
    <property type="project" value="UniProtKB"/>
</dbReference>
<dbReference type="GO" id="GO:0003677">
    <property type="term" value="F:DNA binding"/>
    <property type="evidence" value="ECO:0000304"/>
    <property type="project" value="UniProtKB"/>
</dbReference>
<dbReference type="GO" id="GO:0008270">
    <property type="term" value="F:zinc ion binding"/>
    <property type="evidence" value="ECO:0007669"/>
    <property type="project" value="UniProtKB-KW"/>
</dbReference>
<dbReference type="GO" id="GO:0045893">
    <property type="term" value="P:positive regulation of DNA-templated transcription"/>
    <property type="evidence" value="ECO:0000314"/>
    <property type="project" value="UniProtKB"/>
</dbReference>
<dbReference type="GO" id="GO:0006366">
    <property type="term" value="P:transcription by RNA polymerase II"/>
    <property type="evidence" value="ECO:0000314"/>
    <property type="project" value="UniProtKB"/>
</dbReference>
<dbReference type="InterPro" id="IPR040879">
    <property type="entry name" value="Spt46-like"/>
</dbReference>
<dbReference type="PANTHER" id="PTHR33517:SF3">
    <property type="entry name" value="PROTEIN FAM170A"/>
    <property type="match status" value="1"/>
</dbReference>
<dbReference type="PANTHER" id="PTHR33517">
    <property type="entry name" value="PROTEIN FAM170B-RELATED"/>
    <property type="match status" value="1"/>
</dbReference>
<dbReference type="Pfam" id="PF17734">
    <property type="entry name" value="Spt46"/>
    <property type="match status" value="1"/>
</dbReference>
<accession>Q66LM6</accession>
<accession>B2RW56</accession>
<accession>Q66LM7</accession>
<reference key="1">
    <citation type="submission" date="2004-07" db="EMBL/GenBank/DDBJ databases">
        <authorList>
            <person name="Huang C.Q."/>
            <person name="Liu S."/>
            <person name="Zhai Q.T."/>
        </authorList>
    </citation>
    <scope>NUCLEOTIDE SEQUENCE [MRNA] (ISOFORMS 1 AND 2)</scope>
    <source>
        <strain>C57BL/6J</strain>
    </source>
</reference>
<reference key="2">
    <citation type="journal article" date="2004" name="Genome Res.">
        <title>The status, quality, and expansion of the NIH full-length cDNA project: the Mammalian Gene Collection (MGC).</title>
        <authorList>
            <consortium name="The MGC Project Team"/>
        </authorList>
    </citation>
    <scope>NUCLEOTIDE SEQUENCE [LARGE SCALE MRNA] (ISOFORM 1)</scope>
    <source>
        <tissue>Testis</tissue>
    </source>
</reference>
<reference key="3">
    <citation type="journal article" date="2010" name="Cell">
        <title>A tissue-specific atlas of mouse protein phosphorylation and expression.</title>
        <authorList>
            <person name="Huttlin E.L."/>
            <person name="Jedrychowski M.P."/>
            <person name="Elias J.E."/>
            <person name="Goswami T."/>
            <person name="Rad R."/>
            <person name="Beausoleil S.A."/>
            <person name="Villen J."/>
            <person name="Haas W."/>
            <person name="Sowa M.E."/>
            <person name="Gygi S.P."/>
        </authorList>
    </citation>
    <scope>PHOSPHORYLATION [LARGE SCALE ANALYSIS] AT THR-213 AND SER-308</scope>
    <scope>IDENTIFICATION BY MASS SPECTROMETRY [LARGE SCALE ANALYSIS]</scope>
    <source>
        <tissue>Testis</tissue>
    </source>
</reference>
<reference key="4">
    <citation type="journal article" date="2012" name="Mol. Cell. Biochem.">
        <title>Activation of transcriptional activity of HSE by a novel mouse zinc finger protein ZNFD specifically expressed in testis.</title>
        <authorList>
            <person name="Xu F."/>
            <person name="Wang W."/>
            <person name="Lei C."/>
            <person name="Liu Q."/>
            <person name="Qiu H."/>
            <person name="Muraleedharan V."/>
            <person name="Zhou B."/>
            <person name="Cheng H."/>
            <person name="Huang Z."/>
            <person name="Xu W."/>
            <person name="Li B."/>
            <person name="Wang M."/>
        </authorList>
    </citation>
    <scope>FUNCTION</scope>
    <scope>DNA-BINDING</scope>
    <scope>SUBCELLULAR LOCATION</scope>
    <scope>TISSUE SPECIFICITY</scope>
</reference>
<gene>
    <name type="primary">Fam170a</name>
    <name type="synonym">Gm93</name>
    <name type="synonym">Znfd</name>
</gene>
<organism>
    <name type="scientific">Mus musculus</name>
    <name type="common">Mouse</name>
    <dbReference type="NCBI Taxonomy" id="10090"/>
    <lineage>
        <taxon>Eukaryota</taxon>
        <taxon>Metazoa</taxon>
        <taxon>Chordata</taxon>
        <taxon>Craniata</taxon>
        <taxon>Vertebrata</taxon>
        <taxon>Euteleostomi</taxon>
        <taxon>Mammalia</taxon>
        <taxon>Eutheria</taxon>
        <taxon>Euarchontoglires</taxon>
        <taxon>Glires</taxon>
        <taxon>Rodentia</taxon>
        <taxon>Myomorpha</taxon>
        <taxon>Muroidea</taxon>
        <taxon>Muridae</taxon>
        <taxon>Murinae</taxon>
        <taxon>Mus</taxon>
        <taxon>Mus</taxon>
    </lineage>
</organism>
<comment type="function">
    <text evidence="3">Acts as a nuclear transcription factor that positively regulates the expression of heat shock genes. Binds to heat shock promoter elements (HSE).</text>
</comment>
<comment type="subcellular location">
    <subcellularLocation>
        <location evidence="3">Nucleus</location>
    </subcellularLocation>
</comment>
<comment type="alternative products">
    <event type="alternative splicing"/>
    <isoform>
        <id>Q66LM6-1</id>
        <name>1</name>
        <name>b</name>
        <sequence type="displayed"/>
    </isoform>
    <isoform>
        <id>Q66LM6-2</id>
        <name>2</name>
        <name>a</name>
        <sequence type="described" ref="VSP_032558"/>
    </isoform>
</comment>
<comment type="tissue specificity">
    <text evidence="3">Testis-specific.</text>
</comment>
<comment type="domain">
    <text evidence="1">The N-terminus is necessary for nuclear localization. The C-terminus is necessary for transcriptional activity (By similarity).</text>
</comment>
<comment type="similarity">
    <text evidence="5">Belongs to the FAM170 family.</text>
</comment>
<sequence length="333" mass="37392">MKRRQKRKHLEIEESKEAGISKSQEDISHPESTGVPKAQSPGVGEVSSASEYFSCVSSPQKLIHRSKGTWKLLQDSSKPRSPLDQVPEGEATTAPSQQASSSCPSYKTCVSSLCMNKEERGMKIYYMQVQMKKGVAISWDTKETSESLEKQPRMEEATLPEGVWVGTPPSDVSTRNLLSDSEPIGEEKEHEEKPESDSPPGSPAVEERPRAKTPDWLVTMENGFRCMACCRVFATMESLQEHVQYGIREGFSCHVFHLTMAQLIGSMESESTQEEEEDHTEETEKPKEEKAEEQQPTEEDVGMKKPWSQCPGCVFDSPKDRRRRKDHCDNSGS</sequence>
<evidence type="ECO:0000250" key="1"/>
<evidence type="ECO:0000256" key="2">
    <source>
        <dbReference type="SAM" id="MobiDB-lite"/>
    </source>
</evidence>
<evidence type="ECO:0000269" key="3">
    <source>
    </source>
</evidence>
<evidence type="ECO:0000303" key="4">
    <source ref="1"/>
</evidence>
<evidence type="ECO:0000305" key="5"/>
<evidence type="ECO:0007744" key="6">
    <source>
    </source>
</evidence>
<keyword id="KW-0010">Activator</keyword>
<keyword id="KW-0025">Alternative splicing</keyword>
<keyword id="KW-0238">DNA-binding</keyword>
<keyword id="KW-0479">Metal-binding</keyword>
<keyword id="KW-0539">Nucleus</keyword>
<keyword id="KW-0597">Phosphoprotein</keyword>
<keyword id="KW-1185">Reference proteome</keyword>
<keyword id="KW-0804">Transcription</keyword>
<keyword id="KW-0805">Transcription regulation</keyword>
<keyword id="KW-0862">Zinc</keyword>
<keyword id="KW-0863">Zinc-finger</keyword>
<feature type="chain" id="PRO_0000326112" description="Protein FAM170A">
    <location>
        <begin position="1"/>
        <end position="333"/>
    </location>
</feature>
<feature type="zinc finger region" description="C2H2-type; degenerate">
    <location>
        <begin position="224"/>
        <end position="248"/>
    </location>
</feature>
<feature type="region of interest" description="Disordered" evidence="2">
    <location>
        <begin position="1"/>
        <end position="45"/>
    </location>
</feature>
<feature type="region of interest" description="Disordered" evidence="2">
    <location>
        <begin position="73"/>
        <end position="107"/>
    </location>
</feature>
<feature type="region of interest" description="Disordered" evidence="2">
    <location>
        <begin position="143"/>
        <end position="214"/>
    </location>
</feature>
<feature type="region of interest" description="Disordered" evidence="2">
    <location>
        <begin position="267"/>
        <end position="333"/>
    </location>
</feature>
<feature type="compositionally biased region" description="Basic and acidic residues" evidence="2">
    <location>
        <begin position="10"/>
        <end position="29"/>
    </location>
</feature>
<feature type="compositionally biased region" description="Low complexity" evidence="2">
    <location>
        <begin position="92"/>
        <end position="105"/>
    </location>
</feature>
<feature type="compositionally biased region" description="Basic and acidic residues" evidence="2">
    <location>
        <begin position="143"/>
        <end position="156"/>
    </location>
</feature>
<feature type="compositionally biased region" description="Polar residues" evidence="2">
    <location>
        <begin position="170"/>
        <end position="179"/>
    </location>
</feature>
<feature type="compositionally biased region" description="Basic and acidic residues" evidence="2">
    <location>
        <begin position="185"/>
        <end position="196"/>
    </location>
</feature>
<feature type="compositionally biased region" description="Acidic residues" evidence="2">
    <location>
        <begin position="271"/>
        <end position="281"/>
    </location>
</feature>
<feature type="compositionally biased region" description="Basic and acidic residues" evidence="2">
    <location>
        <begin position="282"/>
        <end position="293"/>
    </location>
</feature>
<feature type="modified residue" description="Phosphothreonine" evidence="6">
    <location>
        <position position="213"/>
    </location>
</feature>
<feature type="modified residue" description="Phosphoserine" evidence="6">
    <location>
        <position position="308"/>
    </location>
</feature>
<feature type="splice variant" id="VSP_032558" description="In isoform 2." evidence="4">
    <original>GISKSQEDISHPESTGVPKAQSPGVGEVSSASEYFSCVSSPQKLIHRSK</original>
    <variation>E</variation>
    <location>
        <begin position="19"/>
        <end position="67"/>
    </location>
</feature>
<name>F170A_MOUSE</name>
<proteinExistence type="evidence at protein level"/>